<dbReference type="EMBL" id="M18905">
    <property type="protein sequence ID" value="AAA49561.1"/>
    <property type="molecule type" value="Genomic_DNA"/>
</dbReference>
<dbReference type="PIR" id="I51343">
    <property type="entry name" value="I51343"/>
</dbReference>
<dbReference type="SMR" id="P09638"/>
<dbReference type="STRING" id="8030.ENSSSAP00000008744"/>
<dbReference type="PaxDb" id="8030-ENSSSAP00000008744"/>
<dbReference type="Proteomes" id="UP000087266">
    <property type="component" value="Unplaced"/>
</dbReference>
<dbReference type="GO" id="GO:0005634">
    <property type="term" value="C:nucleus"/>
    <property type="evidence" value="ECO:0007669"/>
    <property type="project" value="UniProtKB-SubCell"/>
</dbReference>
<dbReference type="GO" id="GO:0000981">
    <property type="term" value="F:DNA-binding transcription factor activity, RNA polymerase II-specific"/>
    <property type="evidence" value="ECO:0007669"/>
    <property type="project" value="InterPro"/>
</dbReference>
<dbReference type="GO" id="GO:0000978">
    <property type="term" value="F:RNA polymerase II cis-regulatory region sequence-specific DNA binding"/>
    <property type="evidence" value="ECO:0007669"/>
    <property type="project" value="TreeGrafter"/>
</dbReference>
<dbReference type="CDD" id="cd00086">
    <property type="entry name" value="homeodomain"/>
    <property type="match status" value="1"/>
</dbReference>
<dbReference type="FunFam" id="1.10.10.60:FF:000176">
    <property type="entry name" value="pancreas/duodenum homeobox protein 1"/>
    <property type="match status" value="1"/>
</dbReference>
<dbReference type="Gene3D" id="1.10.10.60">
    <property type="entry name" value="Homeodomain-like"/>
    <property type="match status" value="1"/>
</dbReference>
<dbReference type="InterPro" id="IPR001356">
    <property type="entry name" value="HD"/>
</dbReference>
<dbReference type="InterPro" id="IPR020479">
    <property type="entry name" value="HD_metazoa"/>
</dbReference>
<dbReference type="InterPro" id="IPR017970">
    <property type="entry name" value="Homeobox_CS"/>
</dbReference>
<dbReference type="InterPro" id="IPR009057">
    <property type="entry name" value="Homeodomain-like_sf"/>
</dbReference>
<dbReference type="PANTHER" id="PTHR45664:SF2">
    <property type="entry name" value="HOMEOTIC PROTEIN PROBOSCIPEDIA"/>
    <property type="match status" value="1"/>
</dbReference>
<dbReference type="PANTHER" id="PTHR45664">
    <property type="entry name" value="PROTEIN ZERKNUELLT 1-RELATED"/>
    <property type="match status" value="1"/>
</dbReference>
<dbReference type="Pfam" id="PF00046">
    <property type="entry name" value="Homeodomain"/>
    <property type="match status" value="1"/>
</dbReference>
<dbReference type="PRINTS" id="PR00024">
    <property type="entry name" value="HOMEOBOX"/>
</dbReference>
<dbReference type="SMART" id="SM00389">
    <property type="entry name" value="HOX"/>
    <property type="match status" value="1"/>
</dbReference>
<dbReference type="SUPFAM" id="SSF46689">
    <property type="entry name" value="Homeodomain-like"/>
    <property type="match status" value="1"/>
</dbReference>
<dbReference type="PROSITE" id="PS00027">
    <property type="entry name" value="HOMEOBOX_1"/>
    <property type="match status" value="1"/>
</dbReference>
<dbReference type="PROSITE" id="PS50071">
    <property type="entry name" value="HOMEOBOX_2"/>
    <property type="match status" value="1"/>
</dbReference>
<feature type="chain" id="PRO_0000200116" description="Homeobox protein Hox-B2">
    <location>
        <begin position="1" status="less than"/>
        <end position="60" status="greater than"/>
    </location>
</feature>
<feature type="DNA-binding region" description="Homeobox" evidence="1">
    <location>
        <begin position="1"/>
        <end position="60"/>
    </location>
</feature>
<feature type="non-terminal residue">
    <location>
        <position position="1"/>
    </location>
</feature>
<feature type="non-terminal residue">
    <location>
        <position position="60"/>
    </location>
</feature>
<sequence>PGRLRTAYTNTQLLELEKEFHFNKYLCRPRRVEIAALLDLTERQVKLWFQNRRMKHKRQT</sequence>
<comment type="function">
    <text>Sequence-specific transcription factor which is part of a developmental regulatory system that provides cells with specific positional identities on the anterior-posterior axis.</text>
</comment>
<comment type="subcellular location">
    <subcellularLocation>
        <location>Nucleus</location>
    </subcellularLocation>
</comment>
<comment type="similarity">
    <text evidence="2">Belongs to the Antp homeobox family. Proboscipedia subfamily.</text>
</comment>
<keyword id="KW-0217">Developmental protein</keyword>
<keyword id="KW-0238">DNA-binding</keyword>
<keyword id="KW-0371">Homeobox</keyword>
<keyword id="KW-0539">Nucleus</keyword>
<keyword id="KW-1185">Reference proteome</keyword>
<keyword id="KW-0804">Transcription</keyword>
<keyword id="KW-0805">Transcription regulation</keyword>
<proteinExistence type="inferred from homology"/>
<name>HXB2_SALSA</name>
<gene>
    <name type="primary">hoxb2</name>
</gene>
<protein>
    <recommendedName>
        <fullName>Homeobox protein Hox-B2</fullName>
    </recommendedName>
    <alternativeName>
        <fullName>S6</fullName>
    </alternativeName>
</protein>
<accession>P09638</accession>
<organism>
    <name type="scientific">Salmo salar</name>
    <name type="common">Atlantic salmon</name>
    <dbReference type="NCBI Taxonomy" id="8030"/>
    <lineage>
        <taxon>Eukaryota</taxon>
        <taxon>Metazoa</taxon>
        <taxon>Chordata</taxon>
        <taxon>Craniata</taxon>
        <taxon>Vertebrata</taxon>
        <taxon>Euteleostomi</taxon>
        <taxon>Actinopterygii</taxon>
        <taxon>Neopterygii</taxon>
        <taxon>Teleostei</taxon>
        <taxon>Protacanthopterygii</taxon>
        <taxon>Salmoniformes</taxon>
        <taxon>Salmonidae</taxon>
        <taxon>Salmoninae</taxon>
        <taxon>Salmo</taxon>
    </lineage>
</organism>
<reference key="1">
    <citation type="journal article" date="1988" name="Gene">
        <title>Molecular cloning and characterization of homeo-box-containing genes from Atlantic salmon.</title>
        <authorList>
            <person name="Fjose A."/>
            <person name="Molven A."/>
            <person name="Eiken H.G."/>
        </authorList>
    </citation>
    <scope>NUCLEOTIDE SEQUENCE [GENOMIC DNA]</scope>
</reference>
<evidence type="ECO:0000255" key="1">
    <source>
        <dbReference type="PROSITE-ProRule" id="PRU00108"/>
    </source>
</evidence>
<evidence type="ECO:0000305" key="2"/>